<dbReference type="EMBL" id="AP009493">
    <property type="protein sequence ID" value="BAG18545.1"/>
    <property type="molecule type" value="Genomic_DNA"/>
</dbReference>
<dbReference type="RefSeq" id="WP_003965790.1">
    <property type="nucleotide sequence ID" value="NC_010572.1"/>
</dbReference>
<dbReference type="SMR" id="B1VXS9"/>
<dbReference type="KEGG" id="sgr:SGR_1716"/>
<dbReference type="eggNOG" id="COG1327">
    <property type="taxonomic scope" value="Bacteria"/>
</dbReference>
<dbReference type="HOGENOM" id="CLU_108412_1_0_11"/>
<dbReference type="Proteomes" id="UP000001685">
    <property type="component" value="Chromosome"/>
</dbReference>
<dbReference type="GO" id="GO:0005524">
    <property type="term" value="F:ATP binding"/>
    <property type="evidence" value="ECO:0007669"/>
    <property type="project" value="UniProtKB-KW"/>
</dbReference>
<dbReference type="GO" id="GO:0003677">
    <property type="term" value="F:DNA binding"/>
    <property type="evidence" value="ECO:0007669"/>
    <property type="project" value="UniProtKB-KW"/>
</dbReference>
<dbReference type="GO" id="GO:0008270">
    <property type="term" value="F:zinc ion binding"/>
    <property type="evidence" value="ECO:0007669"/>
    <property type="project" value="UniProtKB-UniRule"/>
</dbReference>
<dbReference type="GO" id="GO:0045892">
    <property type="term" value="P:negative regulation of DNA-templated transcription"/>
    <property type="evidence" value="ECO:0007669"/>
    <property type="project" value="UniProtKB-UniRule"/>
</dbReference>
<dbReference type="HAMAP" id="MF_00440">
    <property type="entry name" value="NrdR"/>
    <property type="match status" value="1"/>
</dbReference>
<dbReference type="InterPro" id="IPR005144">
    <property type="entry name" value="ATP-cone_dom"/>
</dbReference>
<dbReference type="InterPro" id="IPR055173">
    <property type="entry name" value="NrdR-like_N"/>
</dbReference>
<dbReference type="InterPro" id="IPR003796">
    <property type="entry name" value="RNR_NrdR-like"/>
</dbReference>
<dbReference type="NCBIfam" id="TIGR00244">
    <property type="entry name" value="transcriptional regulator NrdR"/>
    <property type="match status" value="1"/>
</dbReference>
<dbReference type="PANTHER" id="PTHR30455">
    <property type="entry name" value="TRANSCRIPTIONAL REPRESSOR NRDR"/>
    <property type="match status" value="1"/>
</dbReference>
<dbReference type="PANTHER" id="PTHR30455:SF2">
    <property type="entry name" value="TRANSCRIPTIONAL REPRESSOR NRDR"/>
    <property type="match status" value="1"/>
</dbReference>
<dbReference type="Pfam" id="PF03477">
    <property type="entry name" value="ATP-cone"/>
    <property type="match status" value="1"/>
</dbReference>
<dbReference type="Pfam" id="PF22811">
    <property type="entry name" value="Zn_ribbon_NrdR"/>
    <property type="match status" value="1"/>
</dbReference>
<dbReference type="PROSITE" id="PS51161">
    <property type="entry name" value="ATP_CONE"/>
    <property type="match status" value="1"/>
</dbReference>
<sequence length="170" mass="18650">MHCPFCRHPDSRVVDSRTTDDGTSIRRRRQCPDCSRRFTTVETCSLMVVKRSGVTEPFSRTKVISGVRKACQGRPVTEDALAKLGQRVEEAVRATGSAELTTHDVGLAILGPLQELDLVAYLRFASVYRAFDSLEDFEAAIVELRAQRPSAEDRGSGETLEVPAPAIAAD</sequence>
<keyword id="KW-0067">ATP-binding</keyword>
<keyword id="KW-0238">DNA-binding</keyword>
<keyword id="KW-0479">Metal-binding</keyword>
<keyword id="KW-0547">Nucleotide-binding</keyword>
<keyword id="KW-0678">Repressor</keyword>
<keyword id="KW-0804">Transcription</keyword>
<keyword id="KW-0805">Transcription regulation</keyword>
<keyword id="KW-0862">Zinc</keyword>
<keyword id="KW-0863">Zinc-finger</keyword>
<gene>
    <name evidence="1" type="primary">nrdR</name>
    <name type="ordered locus">SGR_1716</name>
</gene>
<reference key="1">
    <citation type="journal article" date="2008" name="J. Bacteriol.">
        <title>Genome sequence of the streptomycin-producing microorganism Streptomyces griseus IFO 13350.</title>
        <authorList>
            <person name="Ohnishi Y."/>
            <person name="Ishikawa J."/>
            <person name="Hara H."/>
            <person name="Suzuki H."/>
            <person name="Ikenoya M."/>
            <person name="Ikeda H."/>
            <person name="Yamashita A."/>
            <person name="Hattori M."/>
            <person name="Horinouchi S."/>
        </authorList>
    </citation>
    <scope>NUCLEOTIDE SEQUENCE [LARGE SCALE GENOMIC DNA]</scope>
    <source>
        <strain>JCM 4626 / CBS 651.72 / NBRC 13350 / KCC S-0626 / ISP 5235</strain>
    </source>
</reference>
<protein>
    <recommendedName>
        <fullName evidence="1">Transcriptional repressor NrdR</fullName>
    </recommendedName>
</protein>
<evidence type="ECO:0000255" key="1">
    <source>
        <dbReference type="HAMAP-Rule" id="MF_00440"/>
    </source>
</evidence>
<evidence type="ECO:0000256" key="2">
    <source>
        <dbReference type="SAM" id="MobiDB-lite"/>
    </source>
</evidence>
<name>NRDR_STRGG</name>
<proteinExistence type="inferred from homology"/>
<organism>
    <name type="scientific">Streptomyces griseus subsp. griseus (strain JCM 4626 / CBS 651.72 / NBRC 13350 / KCC S-0626 / ISP 5235)</name>
    <dbReference type="NCBI Taxonomy" id="455632"/>
    <lineage>
        <taxon>Bacteria</taxon>
        <taxon>Bacillati</taxon>
        <taxon>Actinomycetota</taxon>
        <taxon>Actinomycetes</taxon>
        <taxon>Kitasatosporales</taxon>
        <taxon>Streptomycetaceae</taxon>
        <taxon>Streptomyces</taxon>
    </lineage>
</organism>
<comment type="function">
    <text evidence="1">Negatively regulates transcription of bacterial ribonucleotide reductase nrd genes and operons by binding to NrdR-boxes.</text>
</comment>
<comment type="cofactor">
    <cofactor evidence="1">
        <name>Zn(2+)</name>
        <dbReference type="ChEBI" id="CHEBI:29105"/>
    </cofactor>
    <text evidence="1">Binds 1 zinc ion.</text>
</comment>
<comment type="similarity">
    <text evidence="1">Belongs to the NrdR family.</text>
</comment>
<accession>B1VXS9</accession>
<feature type="chain" id="PRO_1000124552" description="Transcriptional repressor NrdR">
    <location>
        <begin position="1"/>
        <end position="170"/>
    </location>
</feature>
<feature type="domain" description="ATP-cone" evidence="1">
    <location>
        <begin position="46"/>
        <end position="136"/>
    </location>
</feature>
<feature type="zinc finger region" evidence="1">
    <location>
        <begin position="3"/>
        <end position="34"/>
    </location>
</feature>
<feature type="region of interest" description="Disordered" evidence="2">
    <location>
        <begin position="148"/>
        <end position="170"/>
    </location>
</feature>